<sequence>MFSGIIQELGEVCFFEAQGNGLSLGIKSTPLFVTPLVTGDSVAVDGVCLTLTSCNESKIFFDVIPETLACTTLGEKRCSDQVNLEAALKMGDSIGGHLLSGHVFGTAEIFLIKENRYYFRGSKELSQYLFEKGFIAIDGISLTLVSVDSDTFSVGLIPETLQRTTLGKKREGERVNIEIDMSTKIQVDTVKRILASSGKD</sequence>
<feature type="chain" id="PRO_0000068164" description="Riboflavin synthase">
    <location>
        <begin position="1"/>
        <end position="200"/>
    </location>
</feature>
<feature type="repeat" description="Lumazine-binding 1">
    <location>
        <begin position="1"/>
        <end position="97"/>
    </location>
</feature>
<feature type="repeat" description="Lumazine-binding 2">
    <location>
        <begin position="98"/>
        <end position="190"/>
    </location>
</feature>
<feature type="binding site" evidence="3">
    <location>
        <begin position="4"/>
        <end position="6"/>
    </location>
    <ligand>
        <name>2,4-dihydroxypteridine</name>
        <dbReference type="ChEBI" id="CHEBI:16489"/>
        <label>1</label>
    </ligand>
</feature>
<feature type="binding site" evidence="3">
    <location>
        <begin position="48"/>
        <end position="50"/>
    </location>
    <ligand>
        <name>2,4-dihydroxypteridine</name>
        <dbReference type="ChEBI" id="CHEBI:16489"/>
        <label>2</label>
        <note>ligand shared between two trimeric partners</note>
    </ligand>
</feature>
<feature type="binding site" evidence="2">
    <location>
        <begin position="62"/>
        <end position="67"/>
    </location>
    <ligand>
        <name>2,4-dihydroxypteridine</name>
        <dbReference type="ChEBI" id="CHEBI:16489"/>
        <label>2</label>
        <note>ligand shared between two trimeric partners</note>
    </ligand>
</feature>
<feature type="binding site" evidence="3">
    <location>
        <begin position="101"/>
        <end position="103"/>
    </location>
    <ligand>
        <name>2,4-dihydroxypteridine</name>
        <dbReference type="ChEBI" id="CHEBI:16489"/>
        <label>2</label>
        <note>ligand shared between two trimeric partners</note>
    </ligand>
</feature>
<feature type="binding site" description="in other chain" evidence="3">
    <location>
        <position position="132"/>
    </location>
    <ligand>
        <name>2,4-dihydroxypteridine</name>
        <dbReference type="ChEBI" id="CHEBI:16489"/>
        <label>2</label>
        <note>ligand shared between two trimeric partners</note>
    </ligand>
</feature>
<feature type="binding site" evidence="3">
    <location>
        <begin position="141"/>
        <end position="143"/>
    </location>
    <ligand>
        <name>2,4-dihydroxypteridine</name>
        <dbReference type="ChEBI" id="CHEBI:16489"/>
        <label>1</label>
    </ligand>
</feature>
<feature type="binding site" evidence="3">
    <location>
        <begin position="155"/>
        <end position="160"/>
    </location>
    <ligand>
        <name>2,4-dihydroxypteridine</name>
        <dbReference type="ChEBI" id="CHEBI:16489"/>
        <label>1</label>
    </ligand>
</feature>
<organism>
    <name type="scientific">Chlamydia pneumoniae</name>
    <name type="common">Chlamydophila pneumoniae</name>
    <dbReference type="NCBI Taxonomy" id="83558"/>
    <lineage>
        <taxon>Bacteria</taxon>
        <taxon>Pseudomonadati</taxon>
        <taxon>Chlamydiota</taxon>
        <taxon>Chlamydiia</taxon>
        <taxon>Chlamydiales</taxon>
        <taxon>Chlamydiaceae</taxon>
        <taxon>Chlamydia/Chlamydophila group</taxon>
        <taxon>Chlamydia</taxon>
    </lineage>
</organism>
<evidence type="ECO:0000250" key="1"/>
<evidence type="ECO:0000250" key="2">
    <source>
        <dbReference type="UniProtKB" id="P0AFU8"/>
    </source>
</evidence>
<evidence type="ECO:0000250" key="3">
    <source>
        <dbReference type="UniProtKB" id="Q2YN92"/>
    </source>
</evidence>
<accession>Q9Z820</accession>
<accession>Q9JQ33</accession>
<proteinExistence type="inferred from homology"/>
<protein>
    <recommendedName>
        <fullName>Riboflavin synthase</fullName>
        <shortName>RS</shortName>
        <ecNumber>2.5.1.9</ecNumber>
    </recommendedName>
</protein>
<dbReference type="EC" id="2.5.1.9"/>
<dbReference type="EMBL" id="AE001363">
    <property type="protein sequence ID" value="AAD18672.1"/>
    <property type="molecule type" value="Genomic_DNA"/>
</dbReference>
<dbReference type="EMBL" id="AE002161">
    <property type="protein sequence ID" value="AAF38089.1"/>
    <property type="molecule type" value="Genomic_DNA"/>
</dbReference>
<dbReference type="EMBL" id="BA000008">
    <property type="protein sequence ID" value="BAA98738.1"/>
    <property type="molecule type" value="Genomic_DNA"/>
</dbReference>
<dbReference type="EMBL" id="AE009440">
    <property type="protein sequence ID" value="AAP98482.1"/>
    <property type="molecule type" value="Genomic_DNA"/>
</dbReference>
<dbReference type="PIR" id="E72066">
    <property type="entry name" value="E72066"/>
</dbReference>
<dbReference type="PIR" id="H86556">
    <property type="entry name" value="H86556"/>
</dbReference>
<dbReference type="RefSeq" id="NP_224728.1">
    <property type="nucleotide sequence ID" value="NC_000922.1"/>
</dbReference>
<dbReference type="RefSeq" id="WP_010883170.1">
    <property type="nucleotide sequence ID" value="NZ_LN847257.1"/>
</dbReference>
<dbReference type="SMR" id="Q9Z820"/>
<dbReference type="STRING" id="406984.CPK_ORF01047"/>
<dbReference type="GeneID" id="45050574"/>
<dbReference type="KEGG" id="cpa:CP_0220"/>
<dbReference type="KEGG" id="cpj:ribC"/>
<dbReference type="KEGG" id="cpn:CPn_0532"/>
<dbReference type="KEGG" id="cpt:CpB0553"/>
<dbReference type="PATRIC" id="fig|115713.3.peg.592"/>
<dbReference type="eggNOG" id="COG0307">
    <property type="taxonomic scope" value="Bacteria"/>
</dbReference>
<dbReference type="HOGENOM" id="CLU_034388_0_1_0"/>
<dbReference type="UniPathway" id="UPA00275">
    <property type="reaction ID" value="UER00405"/>
</dbReference>
<dbReference type="Proteomes" id="UP000000583">
    <property type="component" value="Chromosome"/>
</dbReference>
<dbReference type="Proteomes" id="UP000000801">
    <property type="component" value="Chromosome"/>
</dbReference>
<dbReference type="GO" id="GO:0004746">
    <property type="term" value="F:riboflavin synthase activity"/>
    <property type="evidence" value="ECO:0007669"/>
    <property type="project" value="UniProtKB-EC"/>
</dbReference>
<dbReference type="GO" id="GO:0009231">
    <property type="term" value="P:riboflavin biosynthetic process"/>
    <property type="evidence" value="ECO:0007669"/>
    <property type="project" value="UniProtKB-UniPathway"/>
</dbReference>
<dbReference type="CDD" id="cd00402">
    <property type="entry name" value="Riboflavin_synthase_like"/>
    <property type="match status" value="1"/>
</dbReference>
<dbReference type="Gene3D" id="2.40.30.20">
    <property type="match status" value="2"/>
</dbReference>
<dbReference type="InterPro" id="IPR023366">
    <property type="entry name" value="ATP_synth_asu-like_sf"/>
</dbReference>
<dbReference type="InterPro" id="IPR001783">
    <property type="entry name" value="Lumazine-bd"/>
</dbReference>
<dbReference type="InterPro" id="IPR026017">
    <property type="entry name" value="Lumazine-bd_dom"/>
</dbReference>
<dbReference type="InterPro" id="IPR017938">
    <property type="entry name" value="Riboflavin_synthase-like_b-brl"/>
</dbReference>
<dbReference type="NCBIfam" id="NF006767">
    <property type="entry name" value="PRK09289.1"/>
    <property type="match status" value="1"/>
</dbReference>
<dbReference type="NCBIfam" id="NF009566">
    <property type="entry name" value="PRK13020.1"/>
    <property type="match status" value="1"/>
</dbReference>
<dbReference type="NCBIfam" id="TIGR00187">
    <property type="entry name" value="ribE"/>
    <property type="match status" value="1"/>
</dbReference>
<dbReference type="PANTHER" id="PTHR21098:SF0">
    <property type="entry name" value="RIBOFLAVIN SYNTHASE"/>
    <property type="match status" value="1"/>
</dbReference>
<dbReference type="PANTHER" id="PTHR21098">
    <property type="entry name" value="RIBOFLAVIN SYNTHASE ALPHA CHAIN"/>
    <property type="match status" value="1"/>
</dbReference>
<dbReference type="Pfam" id="PF00677">
    <property type="entry name" value="Lum_binding"/>
    <property type="match status" value="2"/>
</dbReference>
<dbReference type="PIRSF" id="PIRSF000498">
    <property type="entry name" value="Riboflavin_syn_A"/>
    <property type="match status" value="1"/>
</dbReference>
<dbReference type="SUPFAM" id="SSF63380">
    <property type="entry name" value="Riboflavin synthase domain-like"/>
    <property type="match status" value="2"/>
</dbReference>
<dbReference type="PROSITE" id="PS51177">
    <property type="entry name" value="LUMAZINE_BIND"/>
    <property type="match status" value="2"/>
</dbReference>
<comment type="function">
    <text evidence="1">Catalyzes the dismutation of two molecules of 6,7-dimethyl-8-ribityllumazine, resulting in the formation of riboflavin and 5-amino-6-(D-ribitylamino)uracil.</text>
</comment>
<comment type="catalytic activity">
    <reaction>
        <text>2 6,7-dimethyl-8-(1-D-ribityl)lumazine + H(+) = 5-amino-6-(D-ribitylamino)uracil + riboflavin</text>
        <dbReference type="Rhea" id="RHEA:20772"/>
        <dbReference type="ChEBI" id="CHEBI:15378"/>
        <dbReference type="ChEBI" id="CHEBI:15934"/>
        <dbReference type="ChEBI" id="CHEBI:57986"/>
        <dbReference type="ChEBI" id="CHEBI:58201"/>
        <dbReference type="EC" id="2.5.1.9"/>
    </reaction>
</comment>
<comment type="pathway">
    <text>Cofactor biosynthesis; riboflavin biosynthesis; riboflavin from 2-hydroxy-3-oxobutyl phosphate and 5-amino-6-(D-ribitylamino)uracil: step 2/2.</text>
</comment>
<comment type="subunit">
    <text evidence="1">Homotrimer.</text>
</comment>
<name>RISA_CHLPN</name>
<reference key="1">
    <citation type="journal article" date="1999" name="Nat. Genet.">
        <title>Comparative genomes of Chlamydia pneumoniae and C. trachomatis.</title>
        <authorList>
            <person name="Kalman S."/>
            <person name="Mitchell W.P."/>
            <person name="Marathe R."/>
            <person name="Lammel C.J."/>
            <person name="Fan J."/>
            <person name="Hyman R.W."/>
            <person name="Olinger L."/>
            <person name="Grimwood J."/>
            <person name="Davis R.W."/>
            <person name="Stephens R.S."/>
        </authorList>
    </citation>
    <scope>NUCLEOTIDE SEQUENCE [LARGE SCALE GENOMIC DNA]</scope>
    <source>
        <strain>CWL029</strain>
    </source>
</reference>
<reference key="2">
    <citation type="journal article" date="2000" name="Nucleic Acids Res.">
        <title>Genome sequences of Chlamydia trachomatis MoPn and Chlamydia pneumoniae AR39.</title>
        <authorList>
            <person name="Read T.D."/>
            <person name="Brunham R.C."/>
            <person name="Shen C."/>
            <person name="Gill S.R."/>
            <person name="Heidelberg J.F."/>
            <person name="White O."/>
            <person name="Hickey E.K."/>
            <person name="Peterson J.D."/>
            <person name="Utterback T.R."/>
            <person name="Berry K.J."/>
            <person name="Bass S."/>
            <person name="Linher K.D."/>
            <person name="Weidman J.F."/>
            <person name="Khouri H.M."/>
            <person name="Craven B."/>
            <person name="Bowman C."/>
            <person name="Dodson R.J."/>
            <person name="Gwinn M.L."/>
            <person name="Nelson W.C."/>
            <person name="DeBoy R.T."/>
            <person name="Kolonay J.F."/>
            <person name="McClarty G."/>
            <person name="Salzberg S.L."/>
            <person name="Eisen J.A."/>
            <person name="Fraser C.M."/>
        </authorList>
    </citation>
    <scope>NUCLEOTIDE SEQUENCE [LARGE SCALE GENOMIC DNA]</scope>
    <source>
        <strain>AR39</strain>
    </source>
</reference>
<reference key="3">
    <citation type="journal article" date="2000" name="Nucleic Acids Res.">
        <title>Comparison of whole genome sequences of Chlamydia pneumoniae J138 from Japan and CWL029 from USA.</title>
        <authorList>
            <person name="Shirai M."/>
            <person name="Hirakawa H."/>
            <person name="Kimoto M."/>
            <person name="Tabuchi M."/>
            <person name="Kishi F."/>
            <person name="Ouchi K."/>
            <person name="Shiba T."/>
            <person name="Ishii K."/>
            <person name="Hattori M."/>
            <person name="Kuhara S."/>
            <person name="Nakazawa T."/>
        </authorList>
    </citation>
    <scope>NUCLEOTIDE SEQUENCE [LARGE SCALE GENOMIC DNA]</scope>
    <source>
        <strain>J138</strain>
    </source>
</reference>
<reference key="4">
    <citation type="submission" date="2002-05" db="EMBL/GenBank/DDBJ databases">
        <title>The genome sequence of Chlamydia pneumoniae TW183 and comparison with other Chlamydia strains based on whole genome sequence analysis.</title>
        <authorList>
            <person name="Geng M.M."/>
            <person name="Schuhmacher A."/>
            <person name="Muehldorfer I."/>
            <person name="Bensch K.W."/>
            <person name="Schaefer K.P."/>
            <person name="Schneider S."/>
            <person name="Pohl T."/>
            <person name="Essig A."/>
            <person name="Marre R."/>
            <person name="Melchers K."/>
        </authorList>
    </citation>
    <scope>NUCLEOTIDE SEQUENCE [LARGE SCALE GENOMIC DNA]</scope>
    <source>
        <strain>TW-183</strain>
    </source>
</reference>
<gene>
    <name type="primary">ribE</name>
    <name type="synonym">ribC</name>
    <name type="ordered locus">CPn_0532</name>
    <name type="ordered locus">CP_0220</name>
    <name type="ordered locus">CpB0553</name>
</gene>
<keyword id="KW-0677">Repeat</keyword>
<keyword id="KW-0686">Riboflavin biosynthesis</keyword>
<keyword id="KW-0808">Transferase</keyword>